<proteinExistence type="evidence at protein level"/>
<keyword id="KW-1064">Adaptive immunity</keyword>
<keyword id="KW-1003">Cell membrane</keyword>
<keyword id="KW-1015">Disulfide bond</keyword>
<keyword id="KW-0325">Glycoprotein</keyword>
<keyword id="KW-0391">Immunity</keyword>
<keyword id="KW-0393">Immunoglobulin domain</keyword>
<keyword id="KW-0472">Membrane</keyword>
<keyword id="KW-1267">Proteomics identification</keyword>
<keyword id="KW-0675">Receptor</keyword>
<keyword id="KW-1185">Reference proteome</keyword>
<keyword id="KW-0732">Signal</keyword>
<keyword id="KW-1279">T cell receptor</keyword>
<gene>
    <name evidence="8" type="primary">TRAV17</name>
</gene>
<feature type="signal peptide" evidence="1">
    <location>
        <begin position="1"/>
        <end position="21"/>
    </location>
</feature>
<feature type="chain" id="PRO_5002091832" description="T cell receptor alpha variable 17" evidence="1">
    <location>
        <begin position="22"/>
        <end position="112"/>
    </location>
</feature>
<feature type="domain" description="Ig-like" evidence="2">
    <location>
        <begin position="22"/>
        <end position="112" status="greater than"/>
    </location>
</feature>
<feature type="glycosylation site" description="N-linked (GlcNAc...) asparagine" evidence="1">
    <location>
        <position position="38"/>
    </location>
</feature>
<feature type="glycosylation site" description="N-linked (GlcNAc...) asparagine" evidence="1">
    <location>
        <position position="42"/>
    </location>
</feature>
<feature type="disulfide bond" evidence="2">
    <location>
        <begin position="43"/>
        <end position="109"/>
    </location>
</feature>
<feature type="non-terminal residue">
    <location>
        <position position="112"/>
    </location>
</feature>
<dbReference type="EMBL" id="AC245505">
    <property type="status" value="NOT_ANNOTATED_CDS"/>
    <property type="molecule type" value="Genomic_DNA"/>
</dbReference>
<dbReference type="SMR" id="A0A0B4J275"/>
<dbReference type="FunCoup" id="A0A0B4J275">
    <property type="interactions" value="341"/>
</dbReference>
<dbReference type="IMGT_GENE-DB" id="TRAV17"/>
<dbReference type="GlyCosmos" id="A0A0B4J275">
    <property type="glycosylation" value="2 sites, No reported glycans"/>
</dbReference>
<dbReference type="GlyGen" id="A0A0B4J275">
    <property type="glycosylation" value="2 sites"/>
</dbReference>
<dbReference type="BioMuta" id="TRAV17"/>
<dbReference type="jPOST" id="A0A0B4J275"/>
<dbReference type="Ensembl" id="ENST00000390445.2">
    <property type="protein sequence ID" value="ENSP00000452087.1"/>
    <property type="gene ID" value="ENSG00000211797.2"/>
</dbReference>
<dbReference type="AGR" id="HGNC:12113"/>
<dbReference type="GeneCards" id="TRAV17"/>
<dbReference type="HGNC" id="HGNC:12113">
    <property type="gene designation" value="TRAV17"/>
</dbReference>
<dbReference type="HPA" id="ENSG00000211797">
    <property type="expression patterns" value="Tissue enriched (lymphoid)"/>
</dbReference>
<dbReference type="neXtProt" id="NX_A0A0B4J275"/>
<dbReference type="OpenTargets" id="ENSG00000211797"/>
<dbReference type="VEuPathDB" id="HostDB:ENSG00000211797"/>
<dbReference type="GeneTree" id="ENSGT00940000163398"/>
<dbReference type="HOGENOM" id="CLU_077975_8_3_1"/>
<dbReference type="InParanoid" id="A0A0B4J275"/>
<dbReference type="OMA" id="STWEEKW"/>
<dbReference type="OrthoDB" id="9803478at2759"/>
<dbReference type="PAN-GO" id="A0A0B4J275">
    <property type="GO annotations" value="1 GO annotation based on evolutionary models"/>
</dbReference>
<dbReference type="PhylomeDB" id="A0A0B4J275"/>
<dbReference type="ChiTaRS" id="TRAV17">
    <property type="organism name" value="human"/>
</dbReference>
<dbReference type="Pharos" id="A0A0B4J275">
    <property type="development level" value="Tdark"/>
</dbReference>
<dbReference type="PRO" id="PR:A0A0B4J275"/>
<dbReference type="Proteomes" id="UP000005640">
    <property type="component" value="Chromosome 14"/>
</dbReference>
<dbReference type="RNAct" id="A0A0B4J275">
    <property type="molecule type" value="protein"/>
</dbReference>
<dbReference type="Bgee" id="ENSG00000211797">
    <property type="expression patterns" value="Expressed in granulocyte and 95 other cell types or tissues"/>
</dbReference>
<dbReference type="GO" id="GO:0042101">
    <property type="term" value="C:T cell receptor complex"/>
    <property type="evidence" value="ECO:0007669"/>
    <property type="project" value="UniProtKB-KW"/>
</dbReference>
<dbReference type="GO" id="GO:0002250">
    <property type="term" value="P:adaptive immune response"/>
    <property type="evidence" value="ECO:0007669"/>
    <property type="project" value="UniProtKB-KW"/>
</dbReference>
<dbReference type="GO" id="GO:0009617">
    <property type="term" value="P:response to bacterium"/>
    <property type="evidence" value="ECO:0000318"/>
    <property type="project" value="GO_Central"/>
</dbReference>
<dbReference type="CDD" id="cd04983">
    <property type="entry name" value="IgV_TCR_alpha"/>
    <property type="match status" value="1"/>
</dbReference>
<dbReference type="Gene3D" id="2.60.40.10">
    <property type="entry name" value="Immunoglobulins"/>
    <property type="match status" value="1"/>
</dbReference>
<dbReference type="InterPro" id="IPR007110">
    <property type="entry name" value="Ig-like_dom"/>
</dbReference>
<dbReference type="InterPro" id="IPR036179">
    <property type="entry name" value="Ig-like_dom_sf"/>
</dbReference>
<dbReference type="InterPro" id="IPR013783">
    <property type="entry name" value="Ig-like_fold"/>
</dbReference>
<dbReference type="InterPro" id="IPR013106">
    <property type="entry name" value="Ig_V-set"/>
</dbReference>
<dbReference type="InterPro" id="IPR051896">
    <property type="entry name" value="TCR_alpha_variable"/>
</dbReference>
<dbReference type="PANTHER" id="PTHR19339:SF10">
    <property type="entry name" value="IG-LIKE DOMAIN-CONTAINING PROTEIN-RELATED"/>
    <property type="match status" value="1"/>
</dbReference>
<dbReference type="PANTHER" id="PTHR19339">
    <property type="entry name" value="T CELL RECEPTOR ALPHA VARIABLE 39"/>
    <property type="match status" value="1"/>
</dbReference>
<dbReference type="Pfam" id="PF07686">
    <property type="entry name" value="V-set"/>
    <property type="match status" value="1"/>
</dbReference>
<dbReference type="SMART" id="SM00406">
    <property type="entry name" value="IGv"/>
    <property type="match status" value="1"/>
</dbReference>
<dbReference type="SUPFAM" id="SSF48726">
    <property type="entry name" value="Immunoglobulin"/>
    <property type="match status" value="1"/>
</dbReference>
<dbReference type="PROSITE" id="PS50835">
    <property type="entry name" value="IG_LIKE"/>
    <property type="match status" value="1"/>
</dbReference>
<comment type="function">
    <text evidence="3 5 6 7">V region of the variable domain of T cell receptor (TR) alpha chain that participates in the antigen recognition (PubMed:24600447). Alpha-beta T cell receptors are antigen specific receptors which are essential to the immune response and are present on the cell surface of T lymphocytes. Recognize peptide-major histocompatibility (MH) (pMH) complexes that are displayed by antigen presenting cells (APC), a prerequisite for efficient T cell adaptive immunity against pathogens (PubMed:25493333). Binding of alpha-beta TR to pMH complex initiates TR-CD3 clustering on the cell surface and intracellular activation of LCK that phosphorylates the ITAM motifs of CD3G, CD3D, CD3E and CD247 enabling the recruitment of ZAP70. In turn ZAP70 phosphorylates LAT, which recruits numerous signaling molecules to form the LAT signalosome. The LAT signalosome propagates signal branching to three major signaling pathways, the calcium, the mitogen-activated protein kinase (MAPK) kinase and the nuclear factor NF-kappa-B (NF-kB) pathways, leading to the mobilization of transcription factors that are critical for gene expression and essential for T cell growth and differentiation (PubMed:23524462). The T cell repertoire is generated in the thymus, by V-(D)-J rearrangement. This repertoire is then shaped by intrathymic selection events to generate a peripheral T cell pool of self-MH restricted, non-autoaggressive T cells. Post-thymic interaction of alpha-beta TR with the pMH complexes shapes TR structural and functional avidity (PubMed:15040585).</text>
</comment>
<comment type="subunit">
    <text evidence="4">Alpha-beta TR is a heterodimer composed of an alpha and beta chain; disulfide-linked. The alpha-beta TR is associated with the transmembrane signaling CD3 coreceptor proteins to form the TR-CD3 (TcR or TCR). The assembly of alpha-beta TR heterodimers with CD3 occurs in the endoplasmic reticulum where a single alpha-beta TR heterodimer associates with one CD3D-CD3E heterodimer, one CD3G-CD3E heterodimer and one CD247 homodimer forming a stable octameric structure. CD3D-CD3E and CD3G-CD3E heterodimers preferentially associate with TR alpha and TR beta chains, respectively. The association of the CD247 homodimer is the last step of TcR assembly in the endoplasmic reticulum and is required for transport to the cell surface.</text>
</comment>
<comment type="subcellular location">
    <subcellularLocation>
        <location evidence="4">Cell membrane</location>
    </subcellularLocation>
</comment>
<comment type="polymorphism">
    <text evidence="9">There are several alleles. The sequence shown is that of IMGT allele TRAV17*01.</text>
</comment>
<name>TVA17_HUMAN</name>
<evidence type="ECO:0000255" key="1"/>
<evidence type="ECO:0000255" key="2">
    <source>
        <dbReference type="PROSITE-ProRule" id="PRU00114"/>
    </source>
</evidence>
<evidence type="ECO:0000303" key="3">
    <source>
    </source>
</evidence>
<evidence type="ECO:0000303" key="4">
    <source>
    </source>
</evidence>
<evidence type="ECO:0000303" key="5">
    <source>
    </source>
</evidence>
<evidence type="ECO:0000303" key="6">
    <source>
    </source>
</evidence>
<evidence type="ECO:0000303" key="7">
    <source>
    </source>
</evidence>
<evidence type="ECO:0000303" key="8">
    <source ref="2"/>
</evidence>
<evidence type="ECO:0000305" key="9"/>
<accession>A0A0B4J275</accession>
<reference key="1">
    <citation type="journal article" date="2003" name="Nature">
        <title>The DNA sequence and analysis of human chromosome 14.</title>
        <authorList>
            <person name="Heilig R."/>
            <person name="Eckenberg R."/>
            <person name="Petit J.-L."/>
            <person name="Fonknechten N."/>
            <person name="Da Silva C."/>
            <person name="Cattolico L."/>
            <person name="Levy M."/>
            <person name="Barbe V."/>
            <person name="De Berardinis V."/>
            <person name="Ureta-Vidal A."/>
            <person name="Pelletier E."/>
            <person name="Vico V."/>
            <person name="Anthouard V."/>
            <person name="Rowen L."/>
            <person name="Madan A."/>
            <person name="Qin S."/>
            <person name="Sun H."/>
            <person name="Du H."/>
            <person name="Pepin K."/>
            <person name="Artiguenave F."/>
            <person name="Robert C."/>
            <person name="Cruaud C."/>
            <person name="Bruels T."/>
            <person name="Jaillon O."/>
            <person name="Friedlander L."/>
            <person name="Samson G."/>
            <person name="Brottier P."/>
            <person name="Cure S."/>
            <person name="Segurens B."/>
            <person name="Aniere F."/>
            <person name="Samain S."/>
            <person name="Crespeau H."/>
            <person name="Abbasi N."/>
            <person name="Aiach N."/>
            <person name="Boscus D."/>
            <person name="Dickhoff R."/>
            <person name="Dors M."/>
            <person name="Dubois I."/>
            <person name="Friedman C."/>
            <person name="Gouyvenoux M."/>
            <person name="James R."/>
            <person name="Madan A."/>
            <person name="Mairey-Estrada B."/>
            <person name="Mangenot S."/>
            <person name="Martins N."/>
            <person name="Menard M."/>
            <person name="Oztas S."/>
            <person name="Ratcliffe A."/>
            <person name="Shaffer T."/>
            <person name="Trask B."/>
            <person name="Vacherie B."/>
            <person name="Bellemere C."/>
            <person name="Belser C."/>
            <person name="Besnard-Gonnet M."/>
            <person name="Bartol-Mavel D."/>
            <person name="Boutard M."/>
            <person name="Briez-Silla S."/>
            <person name="Combette S."/>
            <person name="Dufosse-Laurent V."/>
            <person name="Ferron C."/>
            <person name="Lechaplais C."/>
            <person name="Louesse C."/>
            <person name="Muselet D."/>
            <person name="Magdelenat G."/>
            <person name="Pateau E."/>
            <person name="Petit E."/>
            <person name="Sirvain-Trukniewicz P."/>
            <person name="Trybou A."/>
            <person name="Vega-Czarny N."/>
            <person name="Bataille E."/>
            <person name="Bluet E."/>
            <person name="Bordelais I."/>
            <person name="Dubois M."/>
            <person name="Dumont C."/>
            <person name="Guerin T."/>
            <person name="Haffray S."/>
            <person name="Hammadi R."/>
            <person name="Muanga J."/>
            <person name="Pellouin V."/>
            <person name="Robert D."/>
            <person name="Wunderle E."/>
            <person name="Gauguet G."/>
            <person name="Roy A."/>
            <person name="Sainte-Marthe L."/>
            <person name="Verdier J."/>
            <person name="Verdier-Discala C."/>
            <person name="Hillier L.W."/>
            <person name="Fulton L."/>
            <person name="McPherson J."/>
            <person name="Matsuda F."/>
            <person name="Wilson R."/>
            <person name="Scarpelli C."/>
            <person name="Gyapay G."/>
            <person name="Wincker P."/>
            <person name="Saurin W."/>
            <person name="Quetier F."/>
            <person name="Waterston R."/>
            <person name="Hood L."/>
            <person name="Weissenbach J."/>
        </authorList>
    </citation>
    <scope>NUCLEOTIDE SEQUENCE [LARGE SCALE GENOMIC DNA] (IMGT ALLELE TRAV17*01)</scope>
</reference>
<reference key="2">
    <citation type="book" date="2001" name="The T Cell Receptor FactsBook.">
        <title>The T Cell Receptor FactsBook.</title>
        <editorList>
            <person name="Lefranc M.P."/>
            <person name="Lefranc G."/>
        </editorList>
        <authorList>
            <person name="Lefranc M.P."/>
            <person name="Lefranc G."/>
        </authorList>
    </citation>
    <scope>NOMENCLATURE</scope>
</reference>
<reference key="3">
    <citation type="journal article" date="2004" name="Nat. Rev. Immunol.">
        <title>The many important facets of T-cell repertoire diversity.</title>
        <authorList>
            <person name="Nikolich-Zugich J."/>
            <person name="Slifka M.K."/>
            <person name="Messaoudi I."/>
        </authorList>
    </citation>
    <scope>REVIEW ON T CELL REPERTOIRE DIVERSITY</scope>
</reference>
<reference key="4">
    <citation type="journal article" date="2010" name="Cold Spring Harb. Perspect. Biol.">
        <title>Structural biology of the T-cell receptor: insights into receptor assembly, ligand recognition, and initiation of signaling.</title>
        <authorList>
            <person name="Wucherpfennig K.W."/>
            <person name="Gagnon E."/>
            <person name="Call M.J."/>
            <person name="Huseby E.S."/>
            <person name="Call M.E."/>
        </authorList>
    </citation>
    <scope>REVIEW ON T CELL RECEPTOR-CD3 COMPLEX ASSEMBLY</scope>
    <scope>SUBCELLULAR LOCATION</scope>
</reference>
<reference key="5">
    <citation type="journal article" date="2013" name="Nat. Rev. Immunol.">
        <title>T cell receptor signalling networks: branched, diversified and bounded.</title>
        <authorList>
            <person name="Brownlie R.J."/>
            <person name="Zamoyska R."/>
        </authorList>
    </citation>
    <scope>REVIEW ON T CELL RECEPTOR SIGNALING</scope>
</reference>
<reference key="6">
    <citation type="journal article" date="2014" name="Front. Immunol.">
        <title>Immunoglobulin and T Cell Receptor Genes: IMGT((R)) and the Birth and Rise of Immunoinformatics.</title>
        <authorList>
            <person name="Lefranc M.P."/>
        </authorList>
    </citation>
    <scope>NOMENCLATURE</scope>
</reference>
<reference key="7">
    <citation type="journal article" date="2015" name="Annu. Rev. Immunol.">
        <title>T cell antigen receptor recognition of antigen-presenting molecules.</title>
        <authorList>
            <person name="Rossjohn J."/>
            <person name="Gras S."/>
            <person name="Miles J.J."/>
            <person name="Turner S.J."/>
            <person name="Godfrey D.I."/>
            <person name="McCluskey J."/>
        </authorList>
    </citation>
    <scope>REVIEW ON FUNCTION</scope>
</reference>
<organism>
    <name type="scientific">Homo sapiens</name>
    <name type="common">Human</name>
    <dbReference type="NCBI Taxonomy" id="9606"/>
    <lineage>
        <taxon>Eukaryota</taxon>
        <taxon>Metazoa</taxon>
        <taxon>Chordata</taxon>
        <taxon>Craniata</taxon>
        <taxon>Vertebrata</taxon>
        <taxon>Euteleostomi</taxon>
        <taxon>Mammalia</taxon>
        <taxon>Eutheria</taxon>
        <taxon>Euarchontoglires</taxon>
        <taxon>Primates</taxon>
        <taxon>Haplorrhini</taxon>
        <taxon>Catarrhini</taxon>
        <taxon>Hominidae</taxon>
        <taxon>Homo</taxon>
    </lineage>
</organism>
<protein>
    <recommendedName>
        <fullName evidence="8">T cell receptor alpha variable 17</fullName>
    </recommendedName>
</protein>
<sequence>METLLGVSLVILWLQLARVNSQQGEEDPQALSIQEGENATMNCSYKTSINNLQWYRQNSGRGLVHLILIRSNEREKHSGRLRVTLDTSKKSSSLLITASRAADTASYFCATD</sequence>